<comment type="function">
    <text evidence="1">Specifically methylates position 2 of adenine 2503 in 23S rRNA and position 2 of adenine 37 in tRNAs.</text>
</comment>
<comment type="catalytic activity">
    <reaction evidence="1">
        <text>adenosine(2503) in 23S rRNA + 2 reduced [2Fe-2S]-[ferredoxin] + 2 S-adenosyl-L-methionine = 2-methyladenosine(2503) in 23S rRNA + 5'-deoxyadenosine + L-methionine + 2 oxidized [2Fe-2S]-[ferredoxin] + S-adenosyl-L-homocysteine</text>
        <dbReference type="Rhea" id="RHEA:42916"/>
        <dbReference type="Rhea" id="RHEA-COMP:10000"/>
        <dbReference type="Rhea" id="RHEA-COMP:10001"/>
        <dbReference type="Rhea" id="RHEA-COMP:10152"/>
        <dbReference type="Rhea" id="RHEA-COMP:10282"/>
        <dbReference type="ChEBI" id="CHEBI:17319"/>
        <dbReference type="ChEBI" id="CHEBI:33737"/>
        <dbReference type="ChEBI" id="CHEBI:33738"/>
        <dbReference type="ChEBI" id="CHEBI:57844"/>
        <dbReference type="ChEBI" id="CHEBI:57856"/>
        <dbReference type="ChEBI" id="CHEBI:59789"/>
        <dbReference type="ChEBI" id="CHEBI:74411"/>
        <dbReference type="ChEBI" id="CHEBI:74497"/>
        <dbReference type="EC" id="2.1.1.192"/>
    </reaction>
</comment>
<comment type="catalytic activity">
    <reaction evidence="1">
        <text>adenosine(37) in tRNA + 2 reduced [2Fe-2S]-[ferredoxin] + 2 S-adenosyl-L-methionine = 2-methyladenosine(37) in tRNA + 5'-deoxyadenosine + L-methionine + 2 oxidized [2Fe-2S]-[ferredoxin] + S-adenosyl-L-homocysteine</text>
        <dbReference type="Rhea" id="RHEA:43332"/>
        <dbReference type="Rhea" id="RHEA-COMP:10000"/>
        <dbReference type="Rhea" id="RHEA-COMP:10001"/>
        <dbReference type="Rhea" id="RHEA-COMP:10162"/>
        <dbReference type="Rhea" id="RHEA-COMP:10485"/>
        <dbReference type="ChEBI" id="CHEBI:17319"/>
        <dbReference type="ChEBI" id="CHEBI:33737"/>
        <dbReference type="ChEBI" id="CHEBI:33738"/>
        <dbReference type="ChEBI" id="CHEBI:57844"/>
        <dbReference type="ChEBI" id="CHEBI:57856"/>
        <dbReference type="ChEBI" id="CHEBI:59789"/>
        <dbReference type="ChEBI" id="CHEBI:74411"/>
        <dbReference type="ChEBI" id="CHEBI:74497"/>
        <dbReference type="EC" id="2.1.1.192"/>
    </reaction>
</comment>
<comment type="cofactor">
    <cofactor evidence="1">
        <name>[4Fe-4S] cluster</name>
        <dbReference type="ChEBI" id="CHEBI:49883"/>
    </cofactor>
    <text evidence="1">Binds 1 [4Fe-4S] cluster. The cluster is coordinated with 3 cysteines and an exchangeable S-adenosyl-L-methionine.</text>
</comment>
<comment type="subcellular location">
    <subcellularLocation>
        <location evidence="1">Cytoplasm</location>
    </subcellularLocation>
</comment>
<comment type="miscellaneous">
    <text evidence="1">Reaction proceeds by a ping-pong mechanism involving intermediate methylation of a conserved cysteine residue.</text>
</comment>
<comment type="similarity">
    <text evidence="1">Belongs to the radical SAM superfamily. RlmN family.</text>
</comment>
<dbReference type="EC" id="2.1.1.192" evidence="1"/>
<dbReference type="EMBL" id="AP009552">
    <property type="protein sequence ID" value="BAG01077.1"/>
    <property type="molecule type" value="Genomic_DNA"/>
</dbReference>
<dbReference type="RefSeq" id="WP_012264695.1">
    <property type="nucleotide sequence ID" value="NC_010296.1"/>
</dbReference>
<dbReference type="SMR" id="B0JT33"/>
<dbReference type="STRING" id="449447.MAE_12550"/>
<dbReference type="PaxDb" id="449447-MAE_12550"/>
<dbReference type="EnsemblBacteria" id="BAG01077">
    <property type="protein sequence ID" value="BAG01077"/>
    <property type="gene ID" value="MAE_12550"/>
</dbReference>
<dbReference type="KEGG" id="mar:MAE_12550"/>
<dbReference type="PATRIC" id="fig|449447.4.peg.1157"/>
<dbReference type="eggNOG" id="COG0820">
    <property type="taxonomic scope" value="Bacteria"/>
</dbReference>
<dbReference type="HOGENOM" id="CLU_029101_1_1_3"/>
<dbReference type="BioCyc" id="MAER449447:MAE_RS05545-MONOMER"/>
<dbReference type="Proteomes" id="UP000001510">
    <property type="component" value="Chromosome"/>
</dbReference>
<dbReference type="GO" id="GO:0005737">
    <property type="term" value="C:cytoplasm"/>
    <property type="evidence" value="ECO:0007669"/>
    <property type="project" value="UniProtKB-SubCell"/>
</dbReference>
<dbReference type="GO" id="GO:0051539">
    <property type="term" value="F:4 iron, 4 sulfur cluster binding"/>
    <property type="evidence" value="ECO:0007669"/>
    <property type="project" value="UniProtKB-UniRule"/>
</dbReference>
<dbReference type="GO" id="GO:0046872">
    <property type="term" value="F:metal ion binding"/>
    <property type="evidence" value="ECO:0007669"/>
    <property type="project" value="UniProtKB-KW"/>
</dbReference>
<dbReference type="GO" id="GO:0070040">
    <property type="term" value="F:rRNA (adenine(2503)-C2-)-methyltransferase activity"/>
    <property type="evidence" value="ECO:0007669"/>
    <property type="project" value="UniProtKB-UniRule"/>
</dbReference>
<dbReference type="GO" id="GO:0019843">
    <property type="term" value="F:rRNA binding"/>
    <property type="evidence" value="ECO:0007669"/>
    <property type="project" value="UniProtKB-UniRule"/>
</dbReference>
<dbReference type="GO" id="GO:0002935">
    <property type="term" value="F:tRNA (adenine(37)-C2)-methyltransferase activity"/>
    <property type="evidence" value="ECO:0007669"/>
    <property type="project" value="UniProtKB-UniRule"/>
</dbReference>
<dbReference type="GO" id="GO:0000049">
    <property type="term" value="F:tRNA binding"/>
    <property type="evidence" value="ECO:0007669"/>
    <property type="project" value="UniProtKB-UniRule"/>
</dbReference>
<dbReference type="GO" id="GO:0070475">
    <property type="term" value="P:rRNA base methylation"/>
    <property type="evidence" value="ECO:0007669"/>
    <property type="project" value="UniProtKB-UniRule"/>
</dbReference>
<dbReference type="GO" id="GO:0030488">
    <property type="term" value="P:tRNA methylation"/>
    <property type="evidence" value="ECO:0007669"/>
    <property type="project" value="UniProtKB-UniRule"/>
</dbReference>
<dbReference type="CDD" id="cd01335">
    <property type="entry name" value="Radical_SAM"/>
    <property type="match status" value="1"/>
</dbReference>
<dbReference type="FunFam" id="3.20.20.70:FF:000014">
    <property type="entry name" value="Probable dual-specificity RNA methyltransferase RlmN"/>
    <property type="match status" value="1"/>
</dbReference>
<dbReference type="Gene3D" id="1.10.150.530">
    <property type="match status" value="1"/>
</dbReference>
<dbReference type="Gene3D" id="3.20.20.70">
    <property type="entry name" value="Aldolase class I"/>
    <property type="match status" value="1"/>
</dbReference>
<dbReference type="HAMAP" id="MF_01849">
    <property type="entry name" value="RNA_methyltr_RlmN"/>
    <property type="match status" value="1"/>
</dbReference>
<dbReference type="InterPro" id="IPR013785">
    <property type="entry name" value="Aldolase_TIM"/>
</dbReference>
<dbReference type="InterPro" id="IPR040072">
    <property type="entry name" value="Methyltransferase_A"/>
</dbReference>
<dbReference type="InterPro" id="IPR048641">
    <property type="entry name" value="RlmN_N"/>
</dbReference>
<dbReference type="InterPro" id="IPR027492">
    <property type="entry name" value="RNA_MTrfase_RlmN"/>
</dbReference>
<dbReference type="InterPro" id="IPR004383">
    <property type="entry name" value="rRNA_lsu_MTrfase_RlmN/Cfr"/>
</dbReference>
<dbReference type="InterPro" id="IPR007197">
    <property type="entry name" value="rSAM"/>
</dbReference>
<dbReference type="NCBIfam" id="TIGR00048">
    <property type="entry name" value="rRNA_mod_RlmN"/>
    <property type="match status" value="1"/>
</dbReference>
<dbReference type="PANTHER" id="PTHR30544">
    <property type="entry name" value="23S RRNA METHYLTRANSFERASE"/>
    <property type="match status" value="1"/>
</dbReference>
<dbReference type="PANTHER" id="PTHR30544:SF5">
    <property type="entry name" value="RADICAL SAM CORE DOMAIN-CONTAINING PROTEIN"/>
    <property type="match status" value="1"/>
</dbReference>
<dbReference type="Pfam" id="PF04055">
    <property type="entry name" value="Radical_SAM"/>
    <property type="match status" value="1"/>
</dbReference>
<dbReference type="Pfam" id="PF21016">
    <property type="entry name" value="RlmN_N"/>
    <property type="match status" value="1"/>
</dbReference>
<dbReference type="PIRSF" id="PIRSF006004">
    <property type="entry name" value="CHP00048"/>
    <property type="match status" value="1"/>
</dbReference>
<dbReference type="SFLD" id="SFLDF00275">
    <property type="entry name" value="adenosine_C2_methyltransferase"/>
    <property type="match status" value="1"/>
</dbReference>
<dbReference type="SFLD" id="SFLDS00029">
    <property type="entry name" value="Radical_SAM"/>
    <property type="match status" value="1"/>
</dbReference>
<dbReference type="SUPFAM" id="SSF102114">
    <property type="entry name" value="Radical SAM enzymes"/>
    <property type="match status" value="1"/>
</dbReference>
<dbReference type="PROSITE" id="PS51918">
    <property type="entry name" value="RADICAL_SAM"/>
    <property type="match status" value="1"/>
</dbReference>
<name>RLMN_MICAN</name>
<proteinExistence type="inferred from homology"/>
<feature type="chain" id="PRO_0000350258" description="Probable dual-specificity RNA methyltransferase RlmN">
    <location>
        <begin position="1"/>
        <end position="337"/>
    </location>
</feature>
<feature type="domain" description="Radical SAM core" evidence="2">
    <location>
        <begin position="94"/>
        <end position="324"/>
    </location>
</feature>
<feature type="active site" description="Proton acceptor" evidence="1">
    <location>
        <position position="88"/>
    </location>
</feature>
<feature type="active site" description="S-methylcysteine intermediate" evidence="1">
    <location>
        <position position="327"/>
    </location>
</feature>
<feature type="binding site" evidence="1">
    <location>
        <position position="108"/>
    </location>
    <ligand>
        <name>[4Fe-4S] cluster</name>
        <dbReference type="ChEBI" id="CHEBI:49883"/>
        <note>4Fe-4S-S-AdoMet</note>
    </ligand>
</feature>
<feature type="binding site" evidence="1">
    <location>
        <position position="112"/>
    </location>
    <ligand>
        <name>[4Fe-4S] cluster</name>
        <dbReference type="ChEBI" id="CHEBI:49883"/>
        <note>4Fe-4S-S-AdoMet</note>
    </ligand>
</feature>
<feature type="binding site" evidence="1">
    <location>
        <position position="115"/>
    </location>
    <ligand>
        <name>[4Fe-4S] cluster</name>
        <dbReference type="ChEBI" id="CHEBI:49883"/>
        <note>4Fe-4S-S-AdoMet</note>
    </ligand>
</feature>
<feature type="binding site" evidence="1">
    <location>
        <begin position="155"/>
        <end position="156"/>
    </location>
    <ligand>
        <name>S-adenosyl-L-methionine</name>
        <dbReference type="ChEBI" id="CHEBI:59789"/>
    </ligand>
</feature>
<feature type="binding site" evidence="1">
    <location>
        <position position="185"/>
    </location>
    <ligand>
        <name>S-adenosyl-L-methionine</name>
        <dbReference type="ChEBI" id="CHEBI:59789"/>
    </ligand>
</feature>
<feature type="binding site" evidence="1">
    <location>
        <begin position="208"/>
        <end position="210"/>
    </location>
    <ligand>
        <name>S-adenosyl-L-methionine</name>
        <dbReference type="ChEBI" id="CHEBI:59789"/>
    </ligand>
</feature>
<feature type="binding site" evidence="1">
    <location>
        <position position="284"/>
    </location>
    <ligand>
        <name>S-adenosyl-L-methionine</name>
        <dbReference type="ChEBI" id="CHEBI:59789"/>
    </ligand>
</feature>
<feature type="disulfide bond" description="(transient)" evidence="1">
    <location>
        <begin position="101"/>
        <end position="327"/>
    </location>
</feature>
<accession>B0JT33</accession>
<protein>
    <recommendedName>
        <fullName evidence="1">Probable dual-specificity RNA methyltransferase RlmN</fullName>
        <ecNumber evidence="1">2.1.1.192</ecNumber>
    </recommendedName>
    <alternativeName>
        <fullName evidence="1">23S rRNA (adenine(2503)-C(2))-methyltransferase</fullName>
    </alternativeName>
    <alternativeName>
        <fullName evidence="1">23S rRNA m2A2503 methyltransferase</fullName>
    </alternativeName>
    <alternativeName>
        <fullName evidence="1">Ribosomal RNA large subunit methyltransferase N</fullName>
    </alternativeName>
    <alternativeName>
        <fullName evidence="1">tRNA (adenine(37)-C(2))-methyltransferase</fullName>
    </alternativeName>
    <alternativeName>
        <fullName evidence="1">tRNA m2A37 methyltransferase</fullName>
    </alternativeName>
</protein>
<reference key="1">
    <citation type="journal article" date="2007" name="DNA Res.">
        <title>Complete genomic structure of the bloom-forming toxic cyanobacterium Microcystis aeruginosa NIES-843.</title>
        <authorList>
            <person name="Kaneko T."/>
            <person name="Nakajima N."/>
            <person name="Okamoto S."/>
            <person name="Suzuki I."/>
            <person name="Tanabe Y."/>
            <person name="Tamaoki M."/>
            <person name="Nakamura Y."/>
            <person name="Kasai F."/>
            <person name="Watanabe A."/>
            <person name="Kawashima K."/>
            <person name="Kishida Y."/>
            <person name="Ono A."/>
            <person name="Shimizu Y."/>
            <person name="Takahashi C."/>
            <person name="Minami C."/>
            <person name="Fujishiro T."/>
            <person name="Kohara M."/>
            <person name="Katoh M."/>
            <person name="Nakazaki N."/>
            <person name="Nakayama S."/>
            <person name="Yamada M."/>
            <person name="Tabata S."/>
            <person name="Watanabe M.M."/>
        </authorList>
    </citation>
    <scope>NUCLEOTIDE SEQUENCE [LARGE SCALE GENOMIC DNA]</scope>
    <source>
        <strain>NIES-843 / IAM M-247</strain>
    </source>
</reference>
<evidence type="ECO:0000255" key="1">
    <source>
        <dbReference type="HAMAP-Rule" id="MF_01849"/>
    </source>
</evidence>
<evidence type="ECO:0000255" key="2">
    <source>
        <dbReference type="PROSITE-ProRule" id="PRU01266"/>
    </source>
</evidence>
<organism>
    <name type="scientific">Microcystis aeruginosa (strain NIES-843 / IAM M-2473)</name>
    <dbReference type="NCBI Taxonomy" id="449447"/>
    <lineage>
        <taxon>Bacteria</taxon>
        <taxon>Bacillati</taxon>
        <taxon>Cyanobacteriota</taxon>
        <taxon>Cyanophyceae</taxon>
        <taxon>Oscillatoriophycideae</taxon>
        <taxon>Chroococcales</taxon>
        <taxon>Microcystaceae</taxon>
        <taxon>Microcystis</taxon>
    </lineage>
</organism>
<keyword id="KW-0004">4Fe-4S</keyword>
<keyword id="KW-0963">Cytoplasm</keyword>
<keyword id="KW-1015">Disulfide bond</keyword>
<keyword id="KW-0408">Iron</keyword>
<keyword id="KW-0411">Iron-sulfur</keyword>
<keyword id="KW-0479">Metal-binding</keyword>
<keyword id="KW-0489">Methyltransferase</keyword>
<keyword id="KW-0698">rRNA processing</keyword>
<keyword id="KW-0949">S-adenosyl-L-methionine</keyword>
<keyword id="KW-0808">Transferase</keyword>
<keyword id="KW-0819">tRNA processing</keyword>
<gene>
    <name evidence="1" type="primary">rlmN</name>
    <name type="ordered locus">MAE_12550</name>
</gene>
<sequence>MTLLAKSLEELTDWVKDQGQPAYRGKQLHQWLYEKGVHSLADISVFPQEWRSKMADYPIGRSLIHYRSVAPDRTRKYLLKLADGLIIEAVGIPSEKRLTVCVSSQVGCPMACDFCATGKGGFTRNLKAHEIVDQVLTVQEDFQQRVSHVVFMGMGEPLLNIPEVVTAIHCLNKDVGIGQRCLTISTVGLPHKIKQLAEHNLQITFAVSLHASNQQVRAKLIPSADHYLLSNLIQDCQEYVQITGRRVTFEYILLAGVNDLPEHARELAKLVKGFQSHVNLIPYNPIQEVDYQRPDEKRIKAFKTILEQEKVAVTVRYSRGLATDAACGQLRSSVMVQ</sequence>